<accession>P84943</accession>
<organism>
    <name type="scientific">Pithecopus azureus</name>
    <name type="common">Orange-legged monkey tree frog</name>
    <name type="synonym">Phyllomedusa azurea</name>
    <dbReference type="NCBI Taxonomy" id="2034991"/>
    <lineage>
        <taxon>Eukaryota</taxon>
        <taxon>Metazoa</taxon>
        <taxon>Chordata</taxon>
        <taxon>Craniata</taxon>
        <taxon>Vertebrata</taxon>
        <taxon>Euteleostomi</taxon>
        <taxon>Amphibia</taxon>
        <taxon>Batrachia</taxon>
        <taxon>Anura</taxon>
        <taxon>Neobatrachia</taxon>
        <taxon>Hyloidea</taxon>
        <taxon>Hylidae</taxon>
        <taxon>Phyllomedusinae</taxon>
        <taxon>Pithecopus</taxon>
    </lineage>
</organism>
<keyword id="KW-0027">Amidation</keyword>
<keyword id="KW-0878">Amphibian defense peptide</keyword>
<keyword id="KW-0903">Direct protein sequencing</keyword>
<keyword id="KW-0964">Secreted</keyword>
<reference evidence="4" key="1">
    <citation type="journal article" date="2007" name="J. Proteome Res.">
        <title>Amphibian skin secretomics: application of parallel quadrupole time-of-flight mass spectrometry and peptide precursor cDNA cloning to rapidly characterize the skin secretory peptidome of Phyllomedusa hypochondrialis azurea: discovery of a novel peptide family, the hyposins.</title>
        <authorList>
            <person name="Thompson A.H."/>
            <person name="Bjourson A.J."/>
            <person name="Orr D.F."/>
            <person name="Shaw C."/>
            <person name="McClean S."/>
        </authorList>
    </citation>
    <scope>PROTEIN SEQUENCE</scope>
    <scope>SUBCELLULAR LOCATION</scope>
    <scope>TISSUE SPECIFICITY</scope>
    <scope>MASS SPECTROMETRY</scope>
    <scope>AMIDATION AT GLU-5</scope>
    <source>
        <tissue evidence="2">Skin secretion</tissue>
    </source>
</reference>
<name>TY22_PITAZ</name>
<feature type="peptide" id="PRO_0000250412" description="Tryptophyllin-T2-2" evidence="2">
    <location>
        <begin position="1"/>
        <end position="5"/>
    </location>
</feature>
<feature type="modified residue" description="Glutamic acid 1-amide" evidence="2">
    <location>
        <position position="5"/>
    </location>
</feature>
<dbReference type="GO" id="GO:0005576">
    <property type="term" value="C:extracellular region"/>
    <property type="evidence" value="ECO:0007669"/>
    <property type="project" value="UniProtKB-SubCell"/>
</dbReference>
<dbReference type="GO" id="GO:0006952">
    <property type="term" value="P:defense response"/>
    <property type="evidence" value="ECO:0007669"/>
    <property type="project" value="UniProtKB-KW"/>
</dbReference>
<protein>
    <recommendedName>
        <fullName evidence="3">Tryptophyllin-T2-2</fullName>
        <shortName evidence="3">Pha-T2-2</shortName>
    </recommendedName>
    <alternativeName>
        <fullName evidence="3">Tryptophyllin-3</fullName>
    </alternativeName>
</protein>
<sequence length="5" mass="675">FPPWE</sequence>
<proteinExistence type="evidence at protein level"/>
<evidence type="ECO:0000255" key="1"/>
<evidence type="ECO:0000269" key="2">
    <source>
    </source>
</evidence>
<evidence type="ECO:0000303" key="3">
    <source>
    </source>
</evidence>
<evidence type="ECO:0000305" key="4"/>
<comment type="subcellular location">
    <subcellularLocation>
        <location evidence="2">Secreted</location>
    </subcellularLocation>
</comment>
<comment type="tissue specificity">
    <text evidence="2">Expressed by the skin glands.</text>
</comment>
<comment type="mass spectrometry" mass="673.38" method="MALDI" evidence="2"/>
<comment type="similarity">
    <text evidence="1">Belongs to the frog skin active peptide (FSAP) family. Tryptophillin subfamily.</text>
</comment>